<name>MPO1_YEAST</name>
<accession>P25338</accession>
<accession>D6VUC7</accession>
<organism>
    <name type="scientific">Saccharomyces cerevisiae (strain ATCC 204508 / S288c)</name>
    <name type="common">Baker's yeast</name>
    <dbReference type="NCBI Taxonomy" id="559292"/>
    <lineage>
        <taxon>Eukaryota</taxon>
        <taxon>Fungi</taxon>
        <taxon>Dikarya</taxon>
        <taxon>Ascomycota</taxon>
        <taxon>Saccharomycotina</taxon>
        <taxon>Saccharomycetes</taxon>
        <taxon>Saccharomycetales</taxon>
        <taxon>Saccharomycetaceae</taxon>
        <taxon>Saccharomyces</taxon>
    </lineage>
</organism>
<sequence length="174" mass="20173">MGEGLLDLRSQLGFYKFYHHNPKNVLIHSIFVPTILFSGSCMLHRVKIYQSISLTAVLSVLFSIFYCLLYLPTGLLAGVLLLLLNLALIDHRVDLTFKQELGLFTIGWIFQFVGHGVFEKRRPALIDNLVQSLVLAPYFIMFEFLFKLGFMPRLKATLEHDLEIKQRNLRMQRQ</sequence>
<evidence type="ECO:0000255" key="1"/>
<evidence type="ECO:0000269" key="2">
    <source>
    </source>
</evidence>
<evidence type="ECO:0000269" key="3">
    <source>
    </source>
</evidence>
<evidence type="ECO:0000269" key="4">
    <source>
    </source>
</evidence>
<evidence type="ECO:0000269" key="5">
    <source>
    </source>
</evidence>
<evidence type="ECO:0000303" key="6">
    <source>
    </source>
</evidence>
<evidence type="ECO:0000305" key="7"/>
<dbReference type="EC" id="1.14.18.12" evidence="5"/>
<dbReference type="EMBL" id="S58126">
    <property type="protein sequence ID" value="AAD13893.1"/>
    <property type="molecule type" value="Genomic_DNA"/>
</dbReference>
<dbReference type="EMBL" id="S57893">
    <property type="protein sequence ID" value="AAB19614.1"/>
    <property type="molecule type" value="Genomic_DNA"/>
</dbReference>
<dbReference type="EMBL" id="Z72532">
    <property type="protein sequence ID" value="CAA96710.1"/>
    <property type="molecule type" value="Genomic_DNA"/>
</dbReference>
<dbReference type="EMBL" id="BK006941">
    <property type="protein sequence ID" value="DAA08088.1"/>
    <property type="molecule type" value="Genomic_DNA"/>
</dbReference>
<dbReference type="PIR" id="S64012">
    <property type="entry name" value="S64012"/>
</dbReference>
<dbReference type="RefSeq" id="NP_011505.1">
    <property type="nucleotide sequence ID" value="NM_001180875.1"/>
</dbReference>
<dbReference type="SMR" id="P25338"/>
<dbReference type="BioGRID" id="33236">
    <property type="interactions" value="47"/>
</dbReference>
<dbReference type="DIP" id="DIP-4727N"/>
<dbReference type="FunCoup" id="P25338">
    <property type="interactions" value="197"/>
</dbReference>
<dbReference type="STRING" id="4932.YGL010W"/>
<dbReference type="PaxDb" id="4932-YGL010W"/>
<dbReference type="PeptideAtlas" id="P25338"/>
<dbReference type="EnsemblFungi" id="YGL010W_mRNA">
    <property type="protein sequence ID" value="YGL010W"/>
    <property type="gene ID" value="YGL010W"/>
</dbReference>
<dbReference type="GeneID" id="852874"/>
<dbReference type="KEGG" id="sce:YGL010W"/>
<dbReference type="AGR" id="SGD:S000002978"/>
<dbReference type="SGD" id="S000002978">
    <property type="gene designation" value="MPO1"/>
</dbReference>
<dbReference type="VEuPathDB" id="FungiDB:YGL010W"/>
<dbReference type="eggNOG" id="KOG3292">
    <property type="taxonomic scope" value="Eukaryota"/>
</dbReference>
<dbReference type="HOGENOM" id="CLU_081702_2_0_1"/>
<dbReference type="InParanoid" id="P25338"/>
<dbReference type="OMA" id="ETHFAFY"/>
<dbReference type="OrthoDB" id="2124888at2759"/>
<dbReference type="BioCyc" id="MetaCyc:G3O-30532-MONOMER"/>
<dbReference type="BioCyc" id="YEAST:G3O-30532-MONOMER"/>
<dbReference type="SABIO-RK" id="P25338"/>
<dbReference type="BioGRID-ORCS" id="852874">
    <property type="hits" value="1 hit in 10 CRISPR screens"/>
</dbReference>
<dbReference type="PRO" id="PR:P25338"/>
<dbReference type="Proteomes" id="UP000002311">
    <property type="component" value="Chromosome VII"/>
</dbReference>
<dbReference type="RNAct" id="P25338">
    <property type="molecule type" value="protein"/>
</dbReference>
<dbReference type="GO" id="GO:0005783">
    <property type="term" value="C:endoplasmic reticulum"/>
    <property type="evidence" value="ECO:0007005"/>
    <property type="project" value="SGD"/>
</dbReference>
<dbReference type="GO" id="GO:0005789">
    <property type="term" value="C:endoplasmic reticulum membrane"/>
    <property type="evidence" value="ECO:0007669"/>
    <property type="project" value="UniProtKB-SubCell"/>
</dbReference>
<dbReference type="GO" id="GO:0102672">
    <property type="term" value="F:fatty acid alpha-dioxygenase activity"/>
    <property type="evidence" value="ECO:0000314"/>
    <property type="project" value="SGD"/>
</dbReference>
<dbReference type="GO" id="GO:0001561">
    <property type="term" value="P:fatty acid alpha-oxidation"/>
    <property type="evidence" value="ECO:0000314"/>
    <property type="project" value="SGD"/>
</dbReference>
<dbReference type="GO" id="GO:0046521">
    <property type="term" value="P:sphingoid catabolic process"/>
    <property type="evidence" value="ECO:0000315"/>
    <property type="project" value="SGD"/>
</dbReference>
<dbReference type="InterPro" id="IPR009305">
    <property type="entry name" value="Mpo1-like"/>
</dbReference>
<dbReference type="PANTHER" id="PTHR28026:SF9">
    <property type="entry name" value="2-HYDROXY-PALMITIC ACID DIOXYGENASE MPO1"/>
    <property type="match status" value="1"/>
</dbReference>
<dbReference type="PANTHER" id="PTHR28026">
    <property type="entry name" value="DUF962 DOMAIN PROTEIN (AFU_ORTHOLOGUE AFUA_8G05310)"/>
    <property type="match status" value="1"/>
</dbReference>
<dbReference type="Pfam" id="PF06127">
    <property type="entry name" value="Mpo1-like"/>
    <property type="match status" value="1"/>
</dbReference>
<comment type="function">
    <text evidence="4 5">Dioxygenase that catalyzes the alpha-oxidation of 2-hydroxy fatty acids in an iron-dependent manner (PubMed:30530523). Involved in metabolism of phytosphingosine and is required for proper endoplasmic reticulum stress response (PubMed:25345524, PubMed:30530523).</text>
</comment>
<comment type="catalytic activity">
    <reaction evidence="5">
        <text>(R)-2-hydroxyhexadecanoate + O2 = pentadecanoate + CO2 + H2O</text>
        <dbReference type="Rhea" id="RHEA:62404"/>
        <dbReference type="ChEBI" id="CHEBI:15377"/>
        <dbReference type="ChEBI" id="CHEBI:15379"/>
        <dbReference type="ChEBI" id="CHEBI:16526"/>
        <dbReference type="ChEBI" id="CHEBI:75927"/>
        <dbReference type="ChEBI" id="CHEBI:78795"/>
        <dbReference type="EC" id="1.14.18.12"/>
    </reaction>
    <physiologicalReaction direction="left-to-right" evidence="5">
        <dbReference type="Rhea" id="RHEA:62405"/>
    </physiologicalReaction>
</comment>
<comment type="cofactor">
    <cofactor evidence="5">
        <name>Fe(2+)</name>
        <dbReference type="ChEBI" id="CHEBI:29033"/>
    </cofactor>
</comment>
<comment type="biophysicochemical properties">
    <kinetics>
        <KM evidence="5">15.9 uM for 2-hydroxyhexadecanoate</KM>
        <Vmax evidence="5">4.6 mmol/min/g enzyme toward 2-hydroxyhexadecanoate</Vmax>
    </kinetics>
</comment>
<comment type="subcellular location">
    <subcellularLocation>
        <location evidence="2 4">Endoplasmic reticulum membrane</location>
        <topology evidence="2 4">Multi-pass membrane protein</topology>
    </subcellularLocation>
</comment>
<comment type="disruption phenotype">
    <text evidence="4 5">Exhibits a defect in the metabolism that converts phytosphingosine to glycerophospholipids (PubMed:25345524). Leads to sensitivity to tunicamycin (PubMed:30530523).</text>
</comment>
<comment type="miscellaneous">
    <text evidence="3">Present with 486 molecules/cell in log phase SD medium.</text>
</comment>
<comment type="similarity">
    <text evidence="7">Belongs to the MPO1 family.</text>
</comment>
<gene>
    <name evidence="6" type="primary">MPO1</name>
    <name type="ordered locus">YGL010W</name>
    <name type="ORF">YGL021</name>
</gene>
<proteinExistence type="evidence at protein level"/>
<protein>
    <recommendedName>
        <fullName evidence="6">2-hydroxy-palmitic acid dioxygenase MPO1</fullName>
        <ecNumber evidence="5">1.14.18.12</ecNumber>
    </recommendedName>
    <alternativeName>
        <fullName evidence="6">Metabolism of phytosphingosine to odd-numbered fatty acids protein 1</fullName>
        <shortName evidence="6">Metabolism of PHS to odd-numbered FA protein 1</shortName>
    </alternativeName>
</protein>
<reference key="1">
    <citation type="journal article" date="1991" name="Yeast">
        <title>The YGL021 gene encodes a putative membrane protein with a putative leucine zipper motif.</title>
        <authorList>
            <person name="Chen W."/>
            <person name="Capieaux E."/>
            <person name="Balzi E."/>
            <person name="Goffeau A."/>
        </authorList>
    </citation>
    <scope>NUCLEOTIDE SEQUENCE [GENOMIC DNA]</scope>
    <source>
        <strain>ATCC 46191 / IL125-2B</strain>
    </source>
</reference>
<reference key="2">
    <citation type="journal article" date="1991" name="Yeast">
        <title>The DNA sequencing of the 17 kb HindIII fragment spanning the LEU1 and ATE1 loci on chromosome VII from Saccharomyces cerevisiae reveals the PDR6 gene, a new member of the genetic network controlling pleiotropic drug resistance.</title>
        <authorList>
            <person name="Chen W."/>
            <person name="Balzi E."/>
            <person name="Capieaux E."/>
            <person name="Choder M."/>
            <person name="Goffeau A."/>
        </authorList>
    </citation>
    <scope>NUCLEOTIDE SEQUENCE [GENOMIC DNA]</scope>
    <source>
        <strain>ATCC 46191 / IL125-2B</strain>
    </source>
</reference>
<reference key="3">
    <citation type="journal article" date="1997" name="Nature">
        <title>The nucleotide sequence of Saccharomyces cerevisiae chromosome VII.</title>
        <authorList>
            <person name="Tettelin H."/>
            <person name="Agostoni-Carbone M.L."/>
            <person name="Albermann K."/>
            <person name="Albers M."/>
            <person name="Arroyo J."/>
            <person name="Backes U."/>
            <person name="Barreiros T."/>
            <person name="Bertani I."/>
            <person name="Bjourson A.J."/>
            <person name="Brueckner M."/>
            <person name="Bruschi C.V."/>
            <person name="Carignani G."/>
            <person name="Castagnoli L."/>
            <person name="Cerdan E."/>
            <person name="Clemente M.L."/>
            <person name="Coblenz A."/>
            <person name="Coglievina M."/>
            <person name="Coissac E."/>
            <person name="Defoor E."/>
            <person name="Del Bino S."/>
            <person name="Delius H."/>
            <person name="Delneri D."/>
            <person name="de Wergifosse P."/>
            <person name="Dujon B."/>
            <person name="Durand P."/>
            <person name="Entian K.-D."/>
            <person name="Eraso P."/>
            <person name="Escribano V."/>
            <person name="Fabiani L."/>
            <person name="Fartmann B."/>
            <person name="Feroli F."/>
            <person name="Feuermann M."/>
            <person name="Frontali L."/>
            <person name="Garcia-Gonzalez M."/>
            <person name="Garcia-Saez M.I."/>
            <person name="Goffeau A."/>
            <person name="Guerreiro P."/>
            <person name="Hani J."/>
            <person name="Hansen M."/>
            <person name="Hebling U."/>
            <person name="Hernandez K."/>
            <person name="Heumann K."/>
            <person name="Hilger F."/>
            <person name="Hofmann B."/>
            <person name="Indge K.J."/>
            <person name="James C.M."/>
            <person name="Klima R."/>
            <person name="Koetter P."/>
            <person name="Kramer B."/>
            <person name="Kramer W."/>
            <person name="Lauquin G."/>
            <person name="Leuther H."/>
            <person name="Louis E.J."/>
            <person name="Maillier E."/>
            <person name="Marconi A."/>
            <person name="Martegani E."/>
            <person name="Mazon M.J."/>
            <person name="Mazzoni C."/>
            <person name="McReynolds A.D.K."/>
            <person name="Melchioretto P."/>
            <person name="Mewes H.-W."/>
            <person name="Minenkova O."/>
            <person name="Mueller-Auer S."/>
            <person name="Nawrocki A."/>
            <person name="Netter P."/>
            <person name="Neu R."/>
            <person name="Nombela C."/>
            <person name="Oliver S.G."/>
            <person name="Panzeri L."/>
            <person name="Paoluzi S."/>
            <person name="Plevani P."/>
            <person name="Portetelle D."/>
            <person name="Portillo F."/>
            <person name="Potier S."/>
            <person name="Purnelle B."/>
            <person name="Rieger M."/>
            <person name="Riles L."/>
            <person name="Rinaldi T."/>
            <person name="Robben J."/>
            <person name="Rodrigues-Pousada C."/>
            <person name="Rodriguez-Belmonte E."/>
            <person name="Rodriguez-Torres A.M."/>
            <person name="Rose M."/>
            <person name="Ruzzi M."/>
            <person name="Saliola M."/>
            <person name="Sanchez-Perez M."/>
            <person name="Schaefer B."/>
            <person name="Schaefer M."/>
            <person name="Scharfe M."/>
            <person name="Schmidheini T."/>
            <person name="Schreer A."/>
            <person name="Skala J."/>
            <person name="Souciet J.-L."/>
            <person name="Steensma H.Y."/>
            <person name="Talla E."/>
            <person name="Thierry A."/>
            <person name="Vandenbol M."/>
            <person name="van der Aart Q.J.M."/>
            <person name="Van Dyck L."/>
            <person name="Vanoni M."/>
            <person name="Verhasselt P."/>
            <person name="Voet M."/>
            <person name="Volckaert G."/>
            <person name="Wambutt R."/>
            <person name="Watson M.D."/>
            <person name="Weber N."/>
            <person name="Wedler E."/>
            <person name="Wedler H."/>
            <person name="Wipfli P."/>
            <person name="Wolf K."/>
            <person name="Wright L.F."/>
            <person name="Zaccaria P."/>
            <person name="Zimmermann M."/>
            <person name="Zollner A."/>
            <person name="Kleine K."/>
        </authorList>
    </citation>
    <scope>NUCLEOTIDE SEQUENCE [LARGE SCALE GENOMIC DNA]</scope>
    <source>
        <strain>ATCC 204508 / S288c</strain>
    </source>
</reference>
<reference key="4">
    <citation type="journal article" date="2014" name="G3 (Bethesda)">
        <title>The reference genome sequence of Saccharomyces cerevisiae: Then and now.</title>
        <authorList>
            <person name="Engel S.R."/>
            <person name="Dietrich F.S."/>
            <person name="Fisk D.G."/>
            <person name="Binkley G."/>
            <person name="Balakrishnan R."/>
            <person name="Costanzo M.C."/>
            <person name="Dwight S.S."/>
            <person name="Hitz B.C."/>
            <person name="Karra K."/>
            <person name="Nash R.S."/>
            <person name="Weng S."/>
            <person name="Wong E.D."/>
            <person name="Lloyd P."/>
            <person name="Skrzypek M.S."/>
            <person name="Miyasato S.R."/>
            <person name="Simison M."/>
            <person name="Cherry J.M."/>
        </authorList>
    </citation>
    <scope>GENOME REANNOTATION</scope>
    <source>
        <strain>ATCC 204508 / S288c</strain>
    </source>
</reference>
<reference key="5">
    <citation type="journal article" date="2003" name="Nature">
        <title>Global analysis of protein localization in budding yeast.</title>
        <authorList>
            <person name="Huh W.-K."/>
            <person name="Falvo J.V."/>
            <person name="Gerke L.C."/>
            <person name="Carroll A.S."/>
            <person name="Howson R.W."/>
            <person name="Weissman J.S."/>
            <person name="O'Shea E.K."/>
        </authorList>
    </citation>
    <scope>SUBCELLULAR LOCATION [LARGE SCALE ANALYSIS]</scope>
</reference>
<reference key="6">
    <citation type="journal article" date="2003" name="Nature">
        <title>Global analysis of protein expression in yeast.</title>
        <authorList>
            <person name="Ghaemmaghami S."/>
            <person name="Huh W.-K."/>
            <person name="Bower K."/>
            <person name="Howson R.W."/>
            <person name="Belle A."/>
            <person name="Dephoure N."/>
            <person name="O'Shea E.K."/>
            <person name="Weissman J.S."/>
        </authorList>
    </citation>
    <scope>LEVEL OF PROTEIN EXPRESSION [LARGE SCALE ANALYSIS]</scope>
</reference>
<reference key="7">
    <citation type="journal article" date="2006" name="Proc. Natl. Acad. Sci. U.S.A.">
        <title>A global topology map of the Saccharomyces cerevisiae membrane proteome.</title>
        <authorList>
            <person name="Kim H."/>
            <person name="Melen K."/>
            <person name="Oesterberg M."/>
            <person name="von Heijne G."/>
        </authorList>
    </citation>
    <scope>TOPOLOGY [LARGE SCALE ANALYSIS]</scope>
    <source>
        <strain>ATCC 208353 / W303-1A</strain>
    </source>
</reference>
<reference key="8">
    <citation type="journal article" date="2014" name="Nat. Commun.">
        <title>Identification of the phytosphingosine metabolic pathway leading to odd-numbered fatty acids.</title>
        <authorList>
            <person name="Kondo N."/>
            <person name="Ohno Y."/>
            <person name="Yamagata M."/>
            <person name="Obara T."/>
            <person name="Seki N."/>
            <person name="Kitamura T."/>
            <person name="Naganuma T."/>
            <person name="Kihara A."/>
        </authorList>
    </citation>
    <scope>FUNCTION</scope>
    <scope>DISRUPTION PHENOTYPE</scope>
    <scope>SUBCELLULAR LOCATION</scope>
</reference>
<reference key="9">
    <citation type="journal article" date="2019" name="Mol. Cell. Biol.">
        <title>Yeast Mpo1 is a novel dioxygenase that catalyzes the alpha-oxidation of a 2-hydroxy fatty acid in an Fe2+-dependent manner.</title>
        <authorList>
            <person name="Seki N."/>
            <person name="Mori K."/>
            <person name="Kitamura T."/>
            <person name="Miyamoto M."/>
            <person name="Kihara A."/>
        </authorList>
    </citation>
    <scope>FUNCTION</scope>
    <scope>DISRUPTION PHENOTYPE</scope>
    <scope>CATALYTIC ACTIVITY</scope>
    <scope>COFACTOR</scope>
    <scope>BIOPHYSICOCHEMICAL PROPERTIES</scope>
</reference>
<keyword id="KW-0223">Dioxygenase</keyword>
<keyword id="KW-0256">Endoplasmic reticulum</keyword>
<keyword id="KW-0408">Iron</keyword>
<keyword id="KW-0472">Membrane</keyword>
<keyword id="KW-0560">Oxidoreductase</keyword>
<keyword id="KW-1185">Reference proteome</keyword>
<keyword id="KW-0812">Transmembrane</keyword>
<keyword id="KW-1133">Transmembrane helix</keyword>
<feature type="chain" id="PRO_0000202776" description="2-hydroxy-palmitic acid dioxygenase MPO1">
    <location>
        <begin position="1"/>
        <end position="174"/>
    </location>
</feature>
<feature type="topological domain" description="Cytoplasmic" evidence="1">
    <location>
        <begin position="1"/>
        <end position="23"/>
    </location>
</feature>
<feature type="transmembrane region" description="Helical" evidence="1">
    <location>
        <begin position="24"/>
        <end position="44"/>
    </location>
</feature>
<feature type="topological domain" description="Lumenal" evidence="1">
    <location>
        <begin position="45"/>
        <end position="63"/>
    </location>
</feature>
<feature type="transmembrane region" description="Helical" evidence="1">
    <location>
        <begin position="64"/>
        <end position="84"/>
    </location>
</feature>
<feature type="topological domain" description="Cytoplasmic" evidence="1">
    <location>
        <begin position="85"/>
        <end position="98"/>
    </location>
</feature>
<feature type="transmembrane region" description="Helical" evidence="1">
    <location>
        <begin position="99"/>
        <end position="119"/>
    </location>
</feature>
<feature type="topological domain" description="Lumenal" evidence="1">
    <location>
        <begin position="120"/>
        <end position="131"/>
    </location>
</feature>
<feature type="transmembrane region" description="Helical" evidence="1">
    <location>
        <begin position="132"/>
        <end position="152"/>
    </location>
</feature>
<feature type="topological domain" description="Cytoplasmic" evidence="1">
    <location>
        <begin position="153"/>
        <end position="174"/>
    </location>
</feature>
<feature type="sequence conflict" description="In Ref. 1 and 2." evidence="7" ref="1 2">
    <original>T</original>
    <variation>I</variation>
    <location>
        <position position="105"/>
    </location>
</feature>
<feature type="sequence conflict" description="In Ref. 1 and 2." evidence="7" ref="1 2">
    <original>RPALIDNLVQSLVLAPYFIMFEFLFKLGFMPRLKATLEHDLEIKQRNLRMQRQ</original>
    <variation>TSQR</variation>
    <location>
        <begin position="122"/>
        <end position="174"/>
    </location>
</feature>